<keyword id="KW-0002">3D-structure</keyword>
<keyword id="KW-0106">Calcium</keyword>
<keyword id="KW-0165">Cleavage on pair of basic residues</keyword>
<keyword id="KW-0903">Direct protein sequencing</keyword>
<keyword id="KW-1015">Disulfide bond</keyword>
<keyword id="KW-0378">Hydrolase</keyword>
<keyword id="KW-0442">Lipid degradation</keyword>
<keyword id="KW-0443">Lipid metabolism</keyword>
<keyword id="KW-0479">Metal-binding</keyword>
<keyword id="KW-0964">Secreted</keyword>
<keyword id="KW-0732">Signal</keyword>
<sequence length="392" mass="42139">MVSFISISQGVSLCLLVSSMMLGSSAVPVSGKSGSSNTAVSASDNAALPPLISSRCAPPSNKGSKSDLQAEPYNMQKNTEWYESHGGNLTSIGKRDDNLVGGMTLDLPSDAPPISLSSSTNSASDGGKVVAATTAQIQEFTKYAGIAATAYCRSVVPGNKWDCVQCQKWVPDGKIITTFTSLLSDTNGYVLRSDKQKTIYLVFRGTNSFRSAITDIVFNFSDYKPVKGAKVHAGFLSSYEQVVNDYFPVVQEQLTAHPTYKVIVTGHSLGGAQALLAGMDLYQREPRLSPKNLSIFTVGGPRVGNPTFAYYVESTGIPFQRTVHKRDIVPHVPPQSFGFLHPGVESWIKSGTSNVQICTSEIETKDCSNSIVPFTSILDHLSYFDINEGSCL</sequence>
<organism>
    <name type="scientific">Rhizopus niveus</name>
    <dbReference type="NCBI Taxonomy" id="4844"/>
    <lineage>
        <taxon>Eukaryota</taxon>
        <taxon>Fungi</taxon>
        <taxon>Fungi incertae sedis</taxon>
        <taxon>Mucoromycota</taxon>
        <taxon>Mucoromycotina</taxon>
        <taxon>Mucoromycetes</taxon>
        <taxon>Mucorales</taxon>
        <taxon>Mucorineae</taxon>
        <taxon>Rhizopodaceae</taxon>
        <taxon>Rhizopus</taxon>
    </lineage>
</organism>
<comment type="function">
    <text>Hydrolyzes ester bonds of triglycerides as well as of their derived partial glycerides with a strong 1,3-positional specificity.</text>
</comment>
<comment type="catalytic activity">
    <reaction>
        <text>a triacylglycerol + H2O = a diacylglycerol + a fatty acid + H(+)</text>
        <dbReference type="Rhea" id="RHEA:12044"/>
        <dbReference type="ChEBI" id="CHEBI:15377"/>
        <dbReference type="ChEBI" id="CHEBI:15378"/>
        <dbReference type="ChEBI" id="CHEBI:17855"/>
        <dbReference type="ChEBI" id="CHEBI:18035"/>
        <dbReference type="ChEBI" id="CHEBI:28868"/>
        <dbReference type="EC" id="3.1.1.3"/>
    </reaction>
</comment>
<comment type="activity regulation">
    <text>Lipase activity is maximal at a lipid-water interface (interfacial activation), probably by an induced conformational change that results in an increased accessibility of the active site to the substrate.</text>
</comment>
<comment type="biophysicochemical properties">
    <phDependence>
        <text evidence="4 5">Optimum pH is 6.0-6.5.</text>
    </phDependence>
    <temperatureDependence>
        <text evidence="4 5">Optimum temperature is 35 degrees Celsius.</text>
    </temperatureDependence>
</comment>
<comment type="subcellular location">
    <subcellularLocation>
        <location>Secreted</location>
        <location>Extracellular space</location>
    </subcellularLocation>
</comment>
<comment type="miscellaneous">
    <text>Limited proteolysis produces a smaller peptide starting at residue Ser-124, that has altered substrate specificity and biophysicochemical properties.</text>
</comment>
<comment type="similarity">
    <text evidence="7">Belongs to the AB hydrolase superfamily. Lipase family.</text>
</comment>
<evidence type="ECO:0000250" key="1"/>
<evidence type="ECO:0000255" key="2"/>
<evidence type="ECO:0000256" key="3">
    <source>
        <dbReference type="SAM" id="MobiDB-lite"/>
    </source>
</evidence>
<evidence type="ECO:0000269" key="4">
    <source>
    </source>
</evidence>
<evidence type="ECO:0000269" key="5">
    <source>
    </source>
</evidence>
<evidence type="ECO:0000269" key="6">
    <source>
    </source>
</evidence>
<evidence type="ECO:0000305" key="7"/>
<evidence type="ECO:0000305" key="8">
    <source>
    </source>
</evidence>
<evidence type="ECO:0007829" key="9">
    <source>
        <dbReference type="PDB" id="1LGY"/>
    </source>
</evidence>
<feature type="signal peptide" evidence="2">
    <location>
        <begin position="1"/>
        <end position="26"/>
    </location>
</feature>
<feature type="propeptide" id="PRO_0000017733" evidence="5">
    <location>
        <begin position="27"/>
        <end position="95"/>
    </location>
</feature>
<feature type="chain" id="PRO_0000017734" description="Lipase">
    <location>
        <begin position="96"/>
        <end position="392"/>
    </location>
</feature>
<feature type="region of interest" description="Disordered" evidence="3">
    <location>
        <begin position="50"/>
        <end position="69"/>
    </location>
</feature>
<feature type="active site" description="Nucleophile" evidence="8">
    <location>
        <position position="268"/>
    </location>
</feature>
<feature type="active site" description="Charge relay system" evidence="8">
    <location>
        <position position="327"/>
    </location>
</feature>
<feature type="active site" description="Charge relay system" evidence="8">
    <location>
        <position position="380"/>
    </location>
</feature>
<feature type="binding site" evidence="1">
    <location>
        <position position="379"/>
    </location>
    <ligand>
        <name>Ca(2+)</name>
        <dbReference type="ChEBI" id="CHEBI:29108"/>
    </ligand>
</feature>
<feature type="disulfide bond" evidence="6">
    <location>
        <begin position="152"/>
        <end position="391"/>
    </location>
</feature>
<feature type="disulfide bond" evidence="6">
    <location>
        <begin position="163"/>
        <end position="166"/>
    </location>
</feature>
<feature type="disulfide bond" evidence="6">
    <location>
        <begin position="358"/>
        <end position="367"/>
    </location>
</feature>
<feature type="mutagenesis site" description="Increases the optimum temperature to 50 degrees Celsius." evidence="4">
    <original>E</original>
    <variation>V</variation>
    <location>
        <position position="313"/>
    </location>
</feature>
<feature type="sequence conflict" description="In Ref. 3; AAC60540/BAA02181." evidence="7" ref="3">
    <original>I</original>
    <variation>M</variation>
    <location>
        <position position="348"/>
    </location>
</feature>
<feature type="strand" evidence="9">
    <location>
        <begin position="129"/>
        <end position="131"/>
    </location>
</feature>
<feature type="helix" evidence="9">
    <location>
        <begin position="134"/>
        <end position="149"/>
    </location>
</feature>
<feature type="turn" evidence="9">
    <location>
        <begin position="153"/>
        <end position="158"/>
    </location>
</feature>
<feature type="helix" evidence="9">
    <location>
        <begin position="164"/>
        <end position="169"/>
    </location>
</feature>
<feature type="strand" evidence="9">
    <location>
        <begin position="174"/>
        <end position="181"/>
    </location>
</feature>
<feature type="turn" evidence="9">
    <location>
        <begin position="182"/>
        <end position="185"/>
    </location>
</feature>
<feature type="strand" evidence="9">
    <location>
        <begin position="186"/>
        <end position="193"/>
    </location>
</feature>
<feature type="turn" evidence="9">
    <location>
        <begin position="194"/>
        <end position="197"/>
    </location>
</feature>
<feature type="strand" evidence="9">
    <location>
        <begin position="198"/>
        <end position="204"/>
    </location>
</feature>
<feature type="helix" evidence="9">
    <location>
        <begin position="210"/>
        <end position="214"/>
    </location>
</feature>
<feature type="strand" evidence="9">
    <location>
        <begin position="220"/>
        <end position="222"/>
    </location>
</feature>
<feature type="strand" evidence="9">
    <location>
        <begin position="230"/>
        <end position="232"/>
    </location>
</feature>
<feature type="helix" evidence="9">
    <location>
        <begin position="233"/>
        <end position="256"/>
    </location>
</feature>
<feature type="strand" evidence="9">
    <location>
        <begin position="261"/>
        <end position="267"/>
    </location>
</feature>
<feature type="helix" evidence="9">
    <location>
        <begin position="269"/>
        <end position="284"/>
    </location>
</feature>
<feature type="turn" evidence="9">
    <location>
        <begin position="290"/>
        <end position="292"/>
    </location>
</feature>
<feature type="strand" evidence="9">
    <location>
        <begin position="293"/>
        <end position="299"/>
    </location>
</feature>
<feature type="helix" evidence="9">
    <location>
        <begin position="306"/>
        <end position="315"/>
    </location>
</feature>
<feature type="strand" evidence="9">
    <location>
        <begin position="319"/>
        <end position="324"/>
    </location>
</feature>
<feature type="helix" evidence="9">
    <location>
        <begin position="329"/>
        <end position="331"/>
    </location>
</feature>
<feature type="helix" evidence="9">
    <location>
        <begin position="335"/>
        <end position="337"/>
    </location>
</feature>
<feature type="strand" evidence="9">
    <location>
        <begin position="342"/>
        <end position="350"/>
    </location>
</feature>
<feature type="turn" evidence="9">
    <location>
        <begin position="351"/>
        <end position="353"/>
    </location>
</feature>
<feature type="strand" evidence="9">
    <location>
        <begin position="354"/>
        <end position="358"/>
    </location>
</feature>
<feature type="strand" evidence="9">
    <location>
        <begin position="360"/>
        <end position="362"/>
    </location>
</feature>
<feature type="strand" evidence="9">
    <location>
        <begin position="365"/>
        <end position="367"/>
    </location>
</feature>
<feature type="helix" evidence="9">
    <location>
        <begin position="368"/>
        <end position="370"/>
    </location>
</feature>
<feature type="helix" evidence="9">
    <location>
        <begin position="378"/>
        <end position="381"/>
    </location>
</feature>
<feature type="strand" evidence="9">
    <location>
        <begin position="386"/>
        <end position="390"/>
    </location>
</feature>
<reference key="1">
    <citation type="journal article" date="1999" name="Protein Expr. Purif.">
        <title>High-level expression of Rhizopus niveus lipase in the yeast Saccharomyces cerevisiae and structural properties of the expressed enzyme.</title>
        <authorList>
            <person name="Kohno M."/>
            <person name="Enatsu M."/>
            <person name="Yoshiizumi M."/>
            <person name="Kugimiya W."/>
        </authorList>
    </citation>
    <scope>NUCLEOTIDE SEQUENCE [GENOMIC DNA]</scope>
</reference>
<reference key="2">
    <citation type="submission" date="1992-09" db="EMBL/GenBank/DDBJ databases">
        <title>Primary structure of Rhizopus niveus lipase from DNA and protein analyses.</title>
        <authorList>
            <person name="Kugimiya W."/>
            <person name="Kohno M."/>
            <person name="Sasaki M."/>
            <person name="Hashimoto Y."/>
            <person name="Morita Y."/>
        </authorList>
    </citation>
    <scope>NUCLEOTIDE SEQUENCE [GENOMIC DNA]</scope>
</reference>
<reference key="3">
    <citation type="journal article" date="1992" name="Biosci. Biotechnol. Biochem.">
        <title>Cloning and sequence analysis of cDNA encoding Rhizopus niveus lipase.</title>
        <authorList>
            <person name="Kugimiya W."/>
            <person name="Otani Y."/>
            <person name="Kohno M."/>
            <person name="Hashimoto Y."/>
        </authorList>
    </citation>
    <scope>NUCLEOTIDE SEQUENCE [MRNA] OF 96-392</scope>
</reference>
<reference key="4">
    <citation type="journal article" date="1994" name="Biosci. Biotechnol. Biochem.">
        <title>Purification, characterization, and crystallization of two types of lipase from Rhizopus niveus.</title>
        <authorList>
            <person name="Kohno M."/>
            <person name="Kugimiya W."/>
            <person name="Hashimoto Y."/>
            <person name="Morita Y."/>
        </authorList>
    </citation>
    <scope>PROTEIN SEQUENCE OF 44-53; 96-105 AND 124-134</scope>
    <scope>BIOPHYSICOCHEMICAL PROPERTIES</scope>
    <source>
        <strain>NBRC 4759 / AS 3.4816</strain>
    </source>
</reference>
<reference key="5">
    <citation type="journal article" date="2001" name="J. Biotechnol.">
        <title>Improvement of the optimum temperature of lipase activity for Rhizopus niveus by random mutagenesis and its structural interpretation.</title>
        <authorList>
            <person name="Kohno M."/>
            <person name="Enatsu M."/>
            <person name="Funatsu J."/>
            <person name="Yoshiizumi M."/>
            <person name="Kugimiya W."/>
        </authorList>
    </citation>
    <scope>MUTAGENESIS OF GLU-313</scope>
    <scope>BIOPHYSICOCHEMICAL PROPERTIES</scope>
</reference>
<reference key="6">
    <citation type="journal article" date="1996" name="J. Biochem.">
        <title>The crystal structure of lipase II from Rhizopus niveus at 2.2-A resolution.</title>
        <authorList>
            <person name="Kohno M."/>
            <person name="Funatsu J."/>
            <person name="Mikami B."/>
            <person name="Kugimiya W."/>
            <person name="Matsuo T."/>
            <person name="Morita Y."/>
        </authorList>
    </citation>
    <scope>X-RAY CRYSTALLOGRAPHY (2.2 ANGSTROMS) OF 124-392</scope>
    <scope>ACTIVE SITES</scope>
    <scope>DISULFIDE BOND</scope>
    <source>
        <strain>NBRC 4759 / AS 3.4816</strain>
    </source>
</reference>
<dbReference type="EC" id="3.1.1.3"/>
<dbReference type="EMBL" id="AB013496">
    <property type="protein sequence ID" value="BAA31548.1"/>
    <property type="molecule type" value="Genomic_DNA"/>
</dbReference>
<dbReference type="EMBL" id="D13206">
    <property type="protein sequence ID" value="BAA02493.1"/>
    <property type="molecule type" value="Genomic_DNA"/>
</dbReference>
<dbReference type="EMBL" id="S39525">
    <property type="protein sequence ID" value="AAC60540.2"/>
    <property type="molecule type" value="mRNA"/>
</dbReference>
<dbReference type="EMBL" id="D12680">
    <property type="protein sequence ID" value="BAA02181.1"/>
    <property type="molecule type" value="mRNA"/>
</dbReference>
<dbReference type="PIR" id="JT0604">
    <property type="entry name" value="JT0604"/>
</dbReference>
<dbReference type="PIR" id="PC2171">
    <property type="entry name" value="PC2171"/>
</dbReference>
<dbReference type="PIR" id="PC2172">
    <property type="entry name" value="PC2172"/>
</dbReference>
<dbReference type="PDB" id="1LGY">
    <property type="method" value="X-ray"/>
    <property type="resolution" value="2.20 A"/>
    <property type="chains" value="A/B/C=124-392"/>
</dbReference>
<dbReference type="PDBsum" id="1LGY"/>
<dbReference type="SMR" id="P61871"/>
<dbReference type="ESTHER" id="rhidl-lipas">
    <property type="family name" value="Lipase_3"/>
</dbReference>
<dbReference type="EvolutionaryTrace" id="P61871"/>
<dbReference type="GO" id="GO:0005576">
    <property type="term" value="C:extracellular region"/>
    <property type="evidence" value="ECO:0007669"/>
    <property type="project" value="UniProtKB-SubCell"/>
</dbReference>
<dbReference type="GO" id="GO:0046872">
    <property type="term" value="F:metal ion binding"/>
    <property type="evidence" value="ECO:0007669"/>
    <property type="project" value="UniProtKB-KW"/>
</dbReference>
<dbReference type="GO" id="GO:0004806">
    <property type="term" value="F:triacylglycerol lipase activity"/>
    <property type="evidence" value="ECO:0007669"/>
    <property type="project" value="UniProtKB-EC"/>
</dbReference>
<dbReference type="GO" id="GO:0016042">
    <property type="term" value="P:lipid catabolic process"/>
    <property type="evidence" value="ECO:0007669"/>
    <property type="project" value="UniProtKB-KW"/>
</dbReference>
<dbReference type="CDD" id="cd00519">
    <property type="entry name" value="Lipase_3"/>
    <property type="match status" value="1"/>
</dbReference>
<dbReference type="Gene3D" id="3.40.50.1820">
    <property type="entry name" value="alpha/beta hydrolase"/>
    <property type="match status" value="1"/>
</dbReference>
<dbReference type="InterPro" id="IPR029058">
    <property type="entry name" value="AB_hydrolase_fold"/>
</dbReference>
<dbReference type="InterPro" id="IPR002921">
    <property type="entry name" value="Fungal_lipase-type"/>
</dbReference>
<dbReference type="InterPro" id="IPR051218">
    <property type="entry name" value="Sec_MonoDiacylglyc_Lipase"/>
</dbReference>
<dbReference type="PANTHER" id="PTHR45856">
    <property type="entry name" value="ALPHA/BETA-HYDROLASES SUPERFAMILY PROTEIN"/>
    <property type="match status" value="1"/>
</dbReference>
<dbReference type="PANTHER" id="PTHR45856:SF24">
    <property type="entry name" value="FUNGAL LIPASE-LIKE DOMAIN-CONTAINING PROTEIN"/>
    <property type="match status" value="1"/>
</dbReference>
<dbReference type="Pfam" id="PF01764">
    <property type="entry name" value="Lipase_3"/>
    <property type="match status" value="1"/>
</dbReference>
<dbReference type="SUPFAM" id="SSF53474">
    <property type="entry name" value="alpha/beta-Hydrolases"/>
    <property type="match status" value="1"/>
</dbReference>
<dbReference type="PROSITE" id="PS00120">
    <property type="entry name" value="LIPASE_SER"/>
    <property type="match status" value="1"/>
</dbReference>
<accession>P61871</accession>
<accession>O74166</accession>
<accession>P21811</accession>
<accession>Q12237</accession>
<protein>
    <recommendedName>
        <fullName>Lipase</fullName>
        <ecNumber>3.1.1.3</ecNumber>
    </recommendedName>
    <alternativeName>
        <fullName>Lipase II</fullName>
    </alternativeName>
    <alternativeName>
        <fullName>RNL</fullName>
    </alternativeName>
    <alternativeName>
        <fullName>Triacylglycerol lipase</fullName>
    </alternativeName>
</protein>
<proteinExistence type="evidence at protein level"/>
<name>LIP_RHINI</name>